<keyword id="KW-0067">ATP-binding</keyword>
<keyword id="KW-0963">Cytoplasm</keyword>
<keyword id="KW-0436">Ligase</keyword>
<keyword id="KW-0547">Nucleotide-binding</keyword>
<keyword id="KW-0566">Pantothenate biosynthesis</keyword>
<keyword id="KW-1185">Reference proteome</keyword>
<evidence type="ECO:0000255" key="1">
    <source>
        <dbReference type="HAMAP-Rule" id="MF_00158"/>
    </source>
</evidence>
<sequence length="292" mass="31778">MAPAVLKTVADVKDWTAGLRREGHRLALVPTMGFLHEGHLSLIREGRRRADVVAVSIFVNPTQFGPKEDLSRYPRDFEGDVAKCISAGAQAIFAPAGPEVMYPQGYQTYVEVTDVSQGLCGARRPGHFRGVATVVTKLLTLFRPEVALFGEKDYQQLQVIRALNQDLHLGADIVGMPTVREPDGLAMSSRNAYLSPEERQRALALSRGLKAAQALLREGTRESEPLVAAVRRELEAAGLREDYVELVDAERLTPLASVAPGQPARLLVAAFSGTTRLIDNMQLGGEENAGRV</sequence>
<proteinExistence type="inferred from homology"/>
<name>PANC_MYXXD</name>
<protein>
    <recommendedName>
        <fullName evidence="1">Pantothenate synthetase</fullName>
        <shortName evidence="1">PS</shortName>
        <ecNumber evidence="1">6.3.2.1</ecNumber>
    </recommendedName>
    <alternativeName>
        <fullName evidence="1">Pantoate--beta-alanine ligase</fullName>
    </alternativeName>
    <alternativeName>
        <fullName evidence="1">Pantoate-activating enzyme</fullName>
    </alternativeName>
</protein>
<gene>
    <name evidence="1" type="primary">panC</name>
    <name type="ordered locus">MXAN_2056</name>
</gene>
<feature type="chain" id="PRO_0000305494" description="Pantothenate synthetase">
    <location>
        <begin position="1"/>
        <end position="292"/>
    </location>
</feature>
<feature type="active site" description="Proton donor" evidence="1">
    <location>
        <position position="39"/>
    </location>
</feature>
<feature type="binding site" evidence="1">
    <location>
        <begin position="32"/>
        <end position="39"/>
    </location>
    <ligand>
        <name>ATP</name>
        <dbReference type="ChEBI" id="CHEBI:30616"/>
    </ligand>
</feature>
<feature type="binding site" evidence="1">
    <location>
        <position position="63"/>
    </location>
    <ligand>
        <name>(R)-pantoate</name>
        <dbReference type="ChEBI" id="CHEBI:15980"/>
    </ligand>
</feature>
<feature type="binding site" evidence="1">
    <location>
        <position position="63"/>
    </location>
    <ligand>
        <name>beta-alanine</name>
        <dbReference type="ChEBI" id="CHEBI:57966"/>
    </ligand>
</feature>
<feature type="binding site" evidence="1">
    <location>
        <begin position="150"/>
        <end position="153"/>
    </location>
    <ligand>
        <name>ATP</name>
        <dbReference type="ChEBI" id="CHEBI:30616"/>
    </ligand>
</feature>
<feature type="binding site" evidence="1">
    <location>
        <position position="156"/>
    </location>
    <ligand>
        <name>(R)-pantoate</name>
        <dbReference type="ChEBI" id="CHEBI:15980"/>
    </ligand>
</feature>
<feature type="binding site" evidence="1">
    <location>
        <position position="179"/>
    </location>
    <ligand>
        <name>ATP</name>
        <dbReference type="ChEBI" id="CHEBI:30616"/>
    </ligand>
</feature>
<feature type="binding site" evidence="1">
    <location>
        <begin position="187"/>
        <end position="190"/>
    </location>
    <ligand>
        <name>ATP</name>
        <dbReference type="ChEBI" id="CHEBI:30616"/>
    </ligand>
</feature>
<reference key="1">
    <citation type="journal article" date="2006" name="Proc. Natl. Acad. Sci. U.S.A.">
        <title>Evolution of sensory complexity recorded in a myxobacterial genome.</title>
        <authorList>
            <person name="Goldman B.S."/>
            <person name="Nierman W.C."/>
            <person name="Kaiser D."/>
            <person name="Slater S.C."/>
            <person name="Durkin A.S."/>
            <person name="Eisen J.A."/>
            <person name="Ronning C.M."/>
            <person name="Barbazuk W.B."/>
            <person name="Blanchard M."/>
            <person name="Field C."/>
            <person name="Halling C."/>
            <person name="Hinkle G."/>
            <person name="Iartchuk O."/>
            <person name="Kim H.S."/>
            <person name="Mackenzie C."/>
            <person name="Madupu R."/>
            <person name="Miller N."/>
            <person name="Shvartsbeyn A."/>
            <person name="Sullivan S.A."/>
            <person name="Vaudin M."/>
            <person name="Wiegand R."/>
            <person name="Kaplan H.B."/>
        </authorList>
    </citation>
    <scope>NUCLEOTIDE SEQUENCE [LARGE SCALE GENOMIC DNA]</scope>
    <source>
        <strain>DK1622</strain>
    </source>
</reference>
<accession>Q1DAN8</accession>
<dbReference type="EC" id="6.3.2.1" evidence="1"/>
<dbReference type="EMBL" id="CP000113">
    <property type="protein sequence ID" value="ABF90225.1"/>
    <property type="molecule type" value="Genomic_DNA"/>
</dbReference>
<dbReference type="RefSeq" id="WP_011552140.1">
    <property type="nucleotide sequence ID" value="NC_008095.1"/>
</dbReference>
<dbReference type="SMR" id="Q1DAN8"/>
<dbReference type="STRING" id="246197.MXAN_2056"/>
<dbReference type="EnsemblBacteria" id="ABF90225">
    <property type="protein sequence ID" value="ABF90225"/>
    <property type="gene ID" value="MXAN_2056"/>
</dbReference>
<dbReference type="GeneID" id="41359465"/>
<dbReference type="KEGG" id="mxa:MXAN_2056"/>
<dbReference type="eggNOG" id="COG0414">
    <property type="taxonomic scope" value="Bacteria"/>
</dbReference>
<dbReference type="HOGENOM" id="CLU_047148_0_0_7"/>
<dbReference type="OrthoDB" id="9773087at2"/>
<dbReference type="UniPathway" id="UPA00028">
    <property type="reaction ID" value="UER00005"/>
</dbReference>
<dbReference type="Proteomes" id="UP000002402">
    <property type="component" value="Chromosome"/>
</dbReference>
<dbReference type="GO" id="GO:0005829">
    <property type="term" value="C:cytosol"/>
    <property type="evidence" value="ECO:0007669"/>
    <property type="project" value="TreeGrafter"/>
</dbReference>
<dbReference type="GO" id="GO:0005524">
    <property type="term" value="F:ATP binding"/>
    <property type="evidence" value="ECO:0007669"/>
    <property type="project" value="UniProtKB-KW"/>
</dbReference>
<dbReference type="GO" id="GO:0004592">
    <property type="term" value="F:pantoate-beta-alanine ligase activity"/>
    <property type="evidence" value="ECO:0007669"/>
    <property type="project" value="UniProtKB-UniRule"/>
</dbReference>
<dbReference type="GO" id="GO:0015940">
    <property type="term" value="P:pantothenate biosynthetic process"/>
    <property type="evidence" value="ECO:0007669"/>
    <property type="project" value="UniProtKB-UniRule"/>
</dbReference>
<dbReference type="CDD" id="cd00560">
    <property type="entry name" value="PanC"/>
    <property type="match status" value="1"/>
</dbReference>
<dbReference type="FunFam" id="3.30.1300.10:FF:000001">
    <property type="entry name" value="Pantothenate synthetase"/>
    <property type="match status" value="1"/>
</dbReference>
<dbReference type="Gene3D" id="3.40.50.620">
    <property type="entry name" value="HUPs"/>
    <property type="match status" value="1"/>
</dbReference>
<dbReference type="Gene3D" id="3.30.1300.10">
    <property type="entry name" value="Pantoate-beta-alanine ligase, C-terminal domain"/>
    <property type="match status" value="1"/>
</dbReference>
<dbReference type="HAMAP" id="MF_00158">
    <property type="entry name" value="PanC"/>
    <property type="match status" value="1"/>
</dbReference>
<dbReference type="InterPro" id="IPR003721">
    <property type="entry name" value="Pantoate_ligase"/>
</dbReference>
<dbReference type="InterPro" id="IPR042176">
    <property type="entry name" value="Pantoate_ligase_C"/>
</dbReference>
<dbReference type="InterPro" id="IPR014729">
    <property type="entry name" value="Rossmann-like_a/b/a_fold"/>
</dbReference>
<dbReference type="NCBIfam" id="TIGR00018">
    <property type="entry name" value="panC"/>
    <property type="match status" value="1"/>
</dbReference>
<dbReference type="PANTHER" id="PTHR21299">
    <property type="entry name" value="CYTIDYLATE KINASE/PANTOATE-BETA-ALANINE LIGASE"/>
    <property type="match status" value="1"/>
</dbReference>
<dbReference type="PANTHER" id="PTHR21299:SF1">
    <property type="entry name" value="PANTOATE--BETA-ALANINE LIGASE"/>
    <property type="match status" value="1"/>
</dbReference>
<dbReference type="Pfam" id="PF02569">
    <property type="entry name" value="Pantoate_ligase"/>
    <property type="match status" value="1"/>
</dbReference>
<dbReference type="SUPFAM" id="SSF52374">
    <property type="entry name" value="Nucleotidylyl transferase"/>
    <property type="match status" value="1"/>
</dbReference>
<organism>
    <name type="scientific">Myxococcus xanthus (strain DK1622)</name>
    <dbReference type="NCBI Taxonomy" id="246197"/>
    <lineage>
        <taxon>Bacteria</taxon>
        <taxon>Pseudomonadati</taxon>
        <taxon>Myxococcota</taxon>
        <taxon>Myxococcia</taxon>
        <taxon>Myxococcales</taxon>
        <taxon>Cystobacterineae</taxon>
        <taxon>Myxococcaceae</taxon>
        <taxon>Myxococcus</taxon>
    </lineage>
</organism>
<comment type="function">
    <text evidence="1">Catalyzes the condensation of pantoate with beta-alanine in an ATP-dependent reaction via a pantoyl-adenylate intermediate.</text>
</comment>
<comment type="catalytic activity">
    <reaction evidence="1">
        <text>(R)-pantoate + beta-alanine + ATP = (R)-pantothenate + AMP + diphosphate + H(+)</text>
        <dbReference type="Rhea" id="RHEA:10912"/>
        <dbReference type="ChEBI" id="CHEBI:15378"/>
        <dbReference type="ChEBI" id="CHEBI:15980"/>
        <dbReference type="ChEBI" id="CHEBI:29032"/>
        <dbReference type="ChEBI" id="CHEBI:30616"/>
        <dbReference type="ChEBI" id="CHEBI:33019"/>
        <dbReference type="ChEBI" id="CHEBI:57966"/>
        <dbReference type="ChEBI" id="CHEBI:456215"/>
        <dbReference type="EC" id="6.3.2.1"/>
    </reaction>
</comment>
<comment type="pathway">
    <text evidence="1">Cofactor biosynthesis; (R)-pantothenate biosynthesis; (R)-pantothenate from (R)-pantoate and beta-alanine: step 1/1.</text>
</comment>
<comment type="subunit">
    <text evidence="1">Homodimer.</text>
</comment>
<comment type="subcellular location">
    <subcellularLocation>
        <location evidence="1">Cytoplasm</location>
    </subcellularLocation>
</comment>
<comment type="miscellaneous">
    <text evidence="1">The reaction proceeds by a bi uni uni bi ping pong mechanism.</text>
</comment>
<comment type="similarity">
    <text evidence="1">Belongs to the pantothenate synthetase family.</text>
</comment>